<reference key="1">
    <citation type="journal article" date="2009" name="BMC Genomics">
        <title>Pseudogene accumulation in the evolutionary histories of Salmonella enterica serovars Paratyphi A and Typhi.</title>
        <authorList>
            <person name="Holt K.E."/>
            <person name="Thomson N.R."/>
            <person name="Wain J."/>
            <person name="Langridge G.C."/>
            <person name="Hasan R."/>
            <person name="Bhutta Z.A."/>
            <person name="Quail M.A."/>
            <person name="Norbertczak H."/>
            <person name="Walker D."/>
            <person name="Simmonds M."/>
            <person name="White B."/>
            <person name="Bason N."/>
            <person name="Mungall K."/>
            <person name="Dougan G."/>
            <person name="Parkhill J."/>
        </authorList>
    </citation>
    <scope>NUCLEOTIDE SEQUENCE [LARGE SCALE GENOMIC DNA]</scope>
    <source>
        <strain>AKU_12601</strain>
    </source>
</reference>
<feature type="chain" id="PRO_1000141735" description="DNA-directed RNA polymerase subunit beta">
    <location>
        <begin position="1"/>
        <end position="1342"/>
    </location>
</feature>
<gene>
    <name evidence="1" type="primary">rpoB</name>
    <name type="ordered locus">SSPA3706</name>
</gene>
<organism>
    <name type="scientific">Salmonella paratyphi A (strain AKU_12601)</name>
    <dbReference type="NCBI Taxonomy" id="554290"/>
    <lineage>
        <taxon>Bacteria</taxon>
        <taxon>Pseudomonadati</taxon>
        <taxon>Pseudomonadota</taxon>
        <taxon>Gammaproteobacteria</taxon>
        <taxon>Enterobacterales</taxon>
        <taxon>Enterobacteriaceae</taxon>
        <taxon>Salmonella</taxon>
    </lineage>
</organism>
<proteinExistence type="inferred from homology"/>
<keyword id="KW-0240">DNA-directed RNA polymerase</keyword>
<keyword id="KW-0548">Nucleotidyltransferase</keyword>
<keyword id="KW-0804">Transcription</keyword>
<keyword id="KW-0808">Transferase</keyword>
<evidence type="ECO:0000255" key="1">
    <source>
        <dbReference type="HAMAP-Rule" id="MF_01321"/>
    </source>
</evidence>
<name>RPOB_SALPK</name>
<protein>
    <recommendedName>
        <fullName evidence="1">DNA-directed RNA polymerase subunit beta</fullName>
        <shortName evidence="1">RNAP subunit beta</shortName>
        <ecNumber evidence="1">2.7.7.6</ecNumber>
    </recommendedName>
    <alternativeName>
        <fullName evidence="1">RNA polymerase subunit beta</fullName>
    </alternativeName>
    <alternativeName>
        <fullName evidence="1">Transcriptase subunit beta</fullName>
    </alternativeName>
</protein>
<dbReference type="EC" id="2.7.7.6" evidence="1"/>
<dbReference type="EMBL" id="FM200053">
    <property type="protein sequence ID" value="CAR61989.1"/>
    <property type="molecule type" value="Genomic_DNA"/>
</dbReference>
<dbReference type="RefSeq" id="WP_000263105.1">
    <property type="nucleotide sequence ID" value="NC_011147.1"/>
</dbReference>
<dbReference type="SMR" id="B5BJQ3"/>
<dbReference type="KEGG" id="sek:SSPA3706"/>
<dbReference type="HOGENOM" id="CLU_000524_4_0_6"/>
<dbReference type="Proteomes" id="UP000001869">
    <property type="component" value="Chromosome"/>
</dbReference>
<dbReference type="GO" id="GO:0000428">
    <property type="term" value="C:DNA-directed RNA polymerase complex"/>
    <property type="evidence" value="ECO:0007669"/>
    <property type="project" value="UniProtKB-KW"/>
</dbReference>
<dbReference type="GO" id="GO:0003677">
    <property type="term" value="F:DNA binding"/>
    <property type="evidence" value="ECO:0007669"/>
    <property type="project" value="UniProtKB-UniRule"/>
</dbReference>
<dbReference type="GO" id="GO:0003899">
    <property type="term" value="F:DNA-directed RNA polymerase activity"/>
    <property type="evidence" value="ECO:0007669"/>
    <property type="project" value="UniProtKB-UniRule"/>
</dbReference>
<dbReference type="GO" id="GO:0032549">
    <property type="term" value="F:ribonucleoside binding"/>
    <property type="evidence" value="ECO:0007669"/>
    <property type="project" value="InterPro"/>
</dbReference>
<dbReference type="GO" id="GO:0006351">
    <property type="term" value="P:DNA-templated transcription"/>
    <property type="evidence" value="ECO:0007669"/>
    <property type="project" value="UniProtKB-UniRule"/>
</dbReference>
<dbReference type="CDD" id="cd00653">
    <property type="entry name" value="RNA_pol_B_RPB2"/>
    <property type="match status" value="1"/>
</dbReference>
<dbReference type="FunFam" id="2.30.150.10:FF:000001">
    <property type="entry name" value="DNA-directed RNA polymerase subunit beta"/>
    <property type="match status" value="1"/>
</dbReference>
<dbReference type="FunFam" id="2.40.270.10:FF:000003">
    <property type="entry name" value="DNA-directed RNA polymerase subunit beta"/>
    <property type="match status" value="1"/>
</dbReference>
<dbReference type="FunFam" id="2.40.270.10:FF:000004">
    <property type="entry name" value="DNA-directed RNA polymerase subunit beta"/>
    <property type="match status" value="1"/>
</dbReference>
<dbReference type="FunFam" id="2.40.50.100:FF:000006">
    <property type="entry name" value="DNA-directed RNA polymerase subunit beta"/>
    <property type="match status" value="1"/>
</dbReference>
<dbReference type="FunFam" id="2.40.50.150:FF:000001">
    <property type="entry name" value="DNA-directed RNA polymerase subunit beta"/>
    <property type="match status" value="1"/>
</dbReference>
<dbReference type="FunFam" id="3.90.1100.10:FF:000002">
    <property type="entry name" value="DNA-directed RNA polymerase subunit beta"/>
    <property type="match status" value="1"/>
</dbReference>
<dbReference type="FunFam" id="3.90.1110.10:FF:000001">
    <property type="entry name" value="DNA-directed RNA polymerase subunit beta"/>
    <property type="match status" value="1"/>
</dbReference>
<dbReference type="FunFam" id="3.90.1110.10:FF:000004">
    <property type="entry name" value="DNA-directed RNA polymerase subunit beta"/>
    <property type="match status" value="1"/>
</dbReference>
<dbReference type="FunFam" id="3.90.1800.10:FF:000001">
    <property type="entry name" value="DNA-directed RNA polymerase subunit beta"/>
    <property type="match status" value="1"/>
</dbReference>
<dbReference type="Gene3D" id="2.40.50.100">
    <property type="match status" value="1"/>
</dbReference>
<dbReference type="Gene3D" id="2.40.50.150">
    <property type="match status" value="1"/>
</dbReference>
<dbReference type="Gene3D" id="3.90.1100.10">
    <property type="match status" value="2"/>
</dbReference>
<dbReference type="Gene3D" id="6.10.140.1670">
    <property type="match status" value="1"/>
</dbReference>
<dbReference type="Gene3D" id="2.30.150.10">
    <property type="entry name" value="DNA-directed RNA polymerase, beta subunit, external 1 domain"/>
    <property type="match status" value="1"/>
</dbReference>
<dbReference type="Gene3D" id="2.40.270.10">
    <property type="entry name" value="DNA-directed RNA polymerase, subunit 2, domain 6"/>
    <property type="match status" value="1"/>
</dbReference>
<dbReference type="Gene3D" id="3.90.1800.10">
    <property type="entry name" value="RNA polymerase alpha subunit dimerisation domain"/>
    <property type="match status" value="1"/>
</dbReference>
<dbReference type="Gene3D" id="3.90.1110.10">
    <property type="entry name" value="RNA polymerase Rpb2, domain 2"/>
    <property type="match status" value="1"/>
</dbReference>
<dbReference type="HAMAP" id="MF_01321">
    <property type="entry name" value="RNApol_bact_RpoB"/>
    <property type="match status" value="1"/>
</dbReference>
<dbReference type="InterPro" id="IPR042107">
    <property type="entry name" value="DNA-dir_RNA_pol_bsu_ext_1_sf"/>
</dbReference>
<dbReference type="InterPro" id="IPR019462">
    <property type="entry name" value="DNA-dir_RNA_pol_bsu_external_1"/>
</dbReference>
<dbReference type="InterPro" id="IPR015712">
    <property type="entry name" value="DNA-dir_RNA_pol_su2"/>
</dbReference>
<dbReference type="InterPro" id="IPR007120">
    <property type="entry name" value="DNA-dir_RNAP_su2_dom"/>
</dbReference>
<dbReference type="InterPro" id="IPR037033">
    <property type="entry name" value="DNA-dir_RNAP_su2_hyb_sf"/>
</dbReference>
<dbReference type="InterPro" id="IPR010243">
    <property type="entry name" value="RNA_pol_bsu_bac"/>
</dbReference>
<dbReference type="InterPro" id="IPR007121">
    <property type="entry name" value="RNA_pol_bsu_CS"/>
</dbReference>
<dbReference type="InterPro" id="IPR007644">
    <property type="entry name" value="RNA_pol_bsu_protrusion"/>
</dbReference>
<dbReference type="InterPro" id="IPR007642">
    <property type="entry name" value="RNA_pol_Rpb2_2"/>
</dbReference>
<dbReference type="InterPro" id="IPR037034">
    <property type="entry name" value="RNA_pol_Rpb2_2_sf"/>
</dbReference>
<dbReference type="InterPro" id="IPR007645">
    <property type="entry name" value="RNA_pol_Rpb2_3"/>
</dbReference>
<dbReference type="InterPro" id="IPR007641">
    <property type="entry name" value="RNA_pol_Rpb2_7"/>
</dbReference>
<dbReference type="InterPro" id="IPR014724">
    <property type="entry name" value="RNA_pol_RPB2_OB-fold"/>
</dbReference>
<dbReference type="NCBIfam" id="NF001616">
    <property type="entry name" value="PRK00405.1"/>
    <property type="match status" value="1"/>
</dbReference>
<dbReference type="NCBIfam" id="TIGR02013">
    <property type="entry name" value="rpoB"/>
    <property type="match status" value="1"/>
</dbReference>
<dbReference type="PANTHER" id="PTHR20856">
    <property type="entry name" value="DNA-DIRECTED RNA POLYMERASE I SUBUNIT 2"/>
    <property type="match status" value="1"/>
</dbReference>
<dbReference type="Pfam" id="PF04563">
    <property type="entry name" value="RNA_pol_Rpb2_1"/>
    <property type="match status" value="1"/>
</dbReference>
<dbReference type="Pfam" id="PF04561">
    <property type="entry name" value="RNA_pol_Rpb2_2"/>
    <property type="match status" value="2"/>
</dbReference>
<dbReference type="Pfam" id="PF04565">
    <property type="entry name" value="RNA_pol_Rpb2_3"/>
    <property type="match status" value="1"/>
</dbReference>
<dbReference type="Pfam" id="PF10385">
    <property type="entry name" value="RNA_pol_Rpb2_45"/>
    <property type="match status" value="1"/>
</dbReference>
<dbReference type="Pfam" id="PF00562">
    <property type="entry name" value="RNA_pol_Rpb2_6"/>
    <property type="match status" value="1"/>
</dbReference>
<dbReference type="Pfam" id="PF04560">
    <property type="entry name" value="RNA_pol_Rpb2_7"/>
    <property type="match status" value="1"/>
</dbReference>
<dbReference type="SUPFAM" id="SSF64484">
    <property type="entry name" value="beta and beta-prime subunits of DNA dependent RNA-polymerase"/>
    <property type="match status" value="1"/>
</dbReference>
<dbReference type="PROSITE" id="PS01166">
    <property type="entry name" value="RNA_POL_BETA"/>
    <property type="match status" value="1"/>
</dbReference>
<sequence>MVYSYTEKKRIRKDFGKRPQVLDVPYLLSIQLDSFQKFIEQDPEGQYGLEAAFRSVFPIQSYSGNSELQYVSYRLGEPVFDVQECQIRGVTYSAPLRVKLRLVIYEREAPEGTVKDIKEQEVYMGEIPLMTDNGTFVINGTERVIVSQLHRSPGVFFDSDKGKTHSSGKVLYNARIIPYRGSWLDFEFDPKDNLFVRIDRRRKLPATIILRALNYTTEQILDLFFEKVVFEIRDNKLQMELIPERLRGETASFDIEANGKVYVEKGRRITARHIRQLEKDDIKHIEVPVEYIAGKVVSKDYVDESTGELICAANMELSLDLLAKLSQSGHKRIETLFTNDLDHGPYISETVRVDPTNDRLSALVEIYRMMRPGEPPTREAAESLFENLFFSEDRYDLSAVGRMKFNRSLLRDEIEGSGILSKDDIIDVMKKLIDIRNGKGEVDDIDHLGNRRIRSVGEMAENQFRVGLVRVERAVKERLSLGDLDTLMPQDMINAKPISAAVKEFFGSSQLSQFMDQNNPLSEITHKRRISALGPGGLTRERAGFEVRDVHPTHYGRVCPIETPEGPNIGLINSLSVYAQTNEYGFLETPYRRVVDGVVTDEIHYLSAIEEGNYVIAQANSNLDDEGHFVEDLVTCRSKGESSLFSRDQVDYMDVSTQQVVSVGASLIPFLEHDDANRALMGANMQRQAVPTLRADKPLVGTGMERAVAVDSGVTAVAKRGGTVQYVDASRIVIKVNEDEMYPGEAGIDIYNLTKYTRSNQNTCINQMPCVSLGEPVERGDVLADGPSTDLGELALGQNMRVAFMPWNGYNFEDSILVSERVVQEDRFTTIHIQELACVSRDTKLGPEEITADIPNVGEAALSKLDESGIVYIGAEVTGGDILVGKVTPKGETQLTPEEKLLRAIFGEKASDVKDSSLRVPNGVSGTVIDVQVFTRDGVEKDKRALEIEEMQLKQAKKDLSEELQILEAGLFSRIRAVLVSGGVEAEKLDKLPRDRWLELGLTDEEKQNQLEQLAEQYDELKHEFEKKLEAKRRKITQGDDLAPGVLKIVKVYLAVKRRIQPGDKMAGRHGNKGVISKINPIEDMPYDENGTPVDIVLNPLGVPSRMNIGQILETHLGMAAKGIGDKINAMLKQQQEVAKLREFIQRAYDLGADVRQKVDLSTFSDDEVLRLAENLRKGMPIATPVFDGAKEAEIKELLKLGDLPTSGQITLFDGRTGEQFERPVTVGYMYMLKLNHLVDDKMHARSTGSYSLVTQQPLGGKAQFGGQRFGEMEVWALEAYGAAYTLQEMLTVKSDDVNGRTKMYKNIVDGNHQMEPGMPESFNVLLKEIRSLGINIELEDE</sequence>
<comment type="function">
    <text evidence="1">DNA-dependent RNA polymerase catalyzes the transcription of DNA into RNA using the four ribonucleoside triphosphates as substrates.</text>
</comment>
<comment type="catalytic activity">
    <reaction evidence="1">
        <text>RNA(n) + a ribonucleoside 5'-triphosphate = RNA(n+1) + diphosphate</text>
        <dbReference type="Rhea" id="RHEA:21248"/>
        <dbReference type="Rhea" id="RHEA-COMP:14527"/>
        <dbReference type="Rhea" id="RHEA-COMP:17342"/>
        <dbReference type="ChEBI" id="CHEBI:33019"/>
        <dbReference type="ChEBI" id="CHEBI:61557"/>
        <dbReference type="ChEBI" id="CHEBI:140395"/>
        <dbReference type="EC" id="2.7.7.6"/>
    </reaction>
</comment>
<comment type="subunit">
    <text evidence="1">The RNAP catalytic core consists of 2 alpha, 1 beta, 1 beta' and 1 omega subunit. When a sigma factor is associated with the core the holoenzyme is formed, which can initiate transcription.</text>
</comment>
<comment type="similarity">
    <text evidence="1">Belongs to the RNA polymerase beta chain family.</text>
</comment>
<accession>B5BJQ3</accession>